<reference key="1">
    <citation type="journal article" date="2002" name="Lancet">
        <title>Genome and virulence determinants of high virulence community-acquired MRSA.</title>
        <authorList>
            <person name="Baba T."/>
            <person name="Takeuchi F."/>
            <person name="Kuroda M."/>
            <person name="Yuzawa H."/>
            <person name="Aoki K."/>
            <person name="Oguchi A."/>
            <person name="Nagai Y."/>
            <person name="Iwama N."/>
            <person name="Asano K."/>
            <person name="Naimi T."/>
            <person name="Kuroda H."/>
            <person name="Cui L."/>
            <person name="Yamamoto K."/>
            <person name="Hiramatsu K."/>
        </authorList>
    </citation>
    <scope>NUCLEOTIDE SEQUENCE [LARGE SCALE GENOMIC DNA]</scope>
    <source>
        <strain>MW2</strain>
    </source>
</reference>
<evidence type="ECO:0000255" key="1">
    <source>
        <dbReference type="HAMAP-Rule" id="MF_01526"/>
    </source>
</evidence>
<gene>
    <name type="ordered locus">MW1786</name>
</gene>
<feature type="chain" id="PRO_0000109988" description="UPF0342 protein MW1786">
    <location>
        <begin position="1"/>
        <end position="114"/>
    </location>
</feature>
<comment type="similarity">
    <text evidence="1">Belongs to the UPF0342 family.</text>
</comment>
<accession>Q7A0K2</accession>
<name>Y1786_STAAW</name>
<protein>
    <recommendedName>
        <fullName evidence="1">UPF0342 protein MW1786</fullName>
    </recommendedName>
</protein>
<dbReference type="EMBL" id="BA000033">
    <property type="protein sequence ID" value="BAB95651.1"/>
    <property type="molecule type" value="Genomic_DNA"/>
</dbReference>
<dbReference type="RefSeq" id="WP_000290301.1">
    <property type="nucleotide sequence ID" value="NC_003923.1"/>
</dbReference>
<dbReference type="SMR" id="Q7A0K2"/>
<dbReference type="KEGG" id="sam:MW1786"/>
<dbReference type="HOGENOM" id="CLU_140243_3_0_9"/>
<dbReference type="Gene3D" id="1.20.1500.10">
    <property type="entry name" value="YheA/YmcA-like"/>
    <property type="match status" value="1"/>
</dbReference>
<dbReference type="HAMAP" id="MF_01526">
    <property type="entry name" value="UPF0342"/>
    <property type="match status" value="1"/>
</dbReference>
<dbReference type="InterPro" id="IPR010368">
    <property type="entry name" value="Com_YlbF"/>
</dbReference>
<dbReference type="InterPro" id="IPR023378">
    <property type="entry name" value="YheA/YmcA-like_dom_sf"/>
</dbReference>
<dbReference type="NCBIfam" id="NF010212">
    <property type="entry name" value="PRK13676.1-5"/>
    <property type="match status" value="1"/>
</dbReference>
<dbReference type="Pfam" id="PF06133">
    <property type="entry name" value="Com_YlbF"/>
    <property type="match status" value="1"/>
</dbReference>
<dbReference type="SUPFAM" id="SSF158622">
    <property type="entry name" value="YheA/YmcA-like"/>
    <property type="match status" value="1"/>
</dbReference>
<proteinExistence type="inferred from homology"/>
<organism>
    <name type="scientific">Staphylococcus aureus (strain MW2)</name>
    <dbReference type="NCBI Taxonomy" id="196620"/>
    <lineage>
        <taxon>Bacteria</taxon>
        <taxon>Bacillati</taxon>
        <taxon>Bacillota</taxon>
        <taxon>Bacilli</taxon>
        <taxon>Bacillales</taxon>
        <taxon>Staphylococcaceae</taxon>
        <taxon>Staphylococcus</taxon>
    </lineage>
</organism>
<sequence>MAVNLYDYANQLEQALRESEEYKAIKEAFANVKANEESKKLFDEFRETQINFQQKQMQGEEIAEEDLQKAQEQAQAIEKDENISALMNAEQKMSQVFQEINQIIVKPLDEIYAD</sequence>